<protein>
    <recommendedName>
        <fullName>Uncharacterized protein YobI</fullName>
    </recommendedName>
</protein>
<feature type="chain" id="PRO_0000381984" description="Uncharacterized protein YobI">
    <location>
        <begin position="1"/>
        <end position="21"/>
    </location>
</feature>
<accession>C1P604</accession>
<organism>
    <name type="scientific">Escherichia coli (strain K12)</name>
    <dbReference type="NCBI Taxonomy" id="83333"/>
    <lineage>
        <taxon>Bacteria</taxon>
        <taxon>Pseudomonadati</taxon>
        <taxon>Pseudomonadota</taxon>
        <taxon>Gammaproteobacteria</taxon>
        <taxon>Enterobacterales</taxon>
        <taxon>Enterobacteriaceae</taxon>
        <taxon>Escherichia</taxon>
    </lineage>
</organism>
<reference key="1">
    <citation type="journal article" date="1997" name="Science">
        <title>The complete genome sequence of Escherichia coli K-12.</title>
        <authorList>
            <person name="Blattner F.R."/>
            <person name="Plunkett G. III"/>
            <person name="Bloch C.A."/>
            <person name="Perna N.T."/>
            <person name="Burland V."/>
            <person name="Riley M."/>
            <person name="Collado-Vides J."/>
            <person name="Glasner J.D."/>
            <person name="Rode C.K."/>
            <person name="Mayhew G.F."/>
            <person name="Gregor J."/>
            <person name="Davis N.W."/>
            <person name="Kirkpatrick H.A."/>
            <person name="Goeden M.A."/>
            <person name="Rose D.J."/>
            <person name="Mau B."/>
            <person name="Shao Y."/>
        </authorList>
    </citation>
    <scope>NUCLEOTIDE SEQUENCE [LARGE SCALE GENOMIC DNA]</scope>
    <source>
        <strain>K12 / MG1655 / ATCC 47076</strain>
    </source>
</reference>
<reference key="2">
    <citation type="journal article" date="2006" name="Mol. Syst. Biol.">
        <title>Highly accurate genome sequences of Escherichia coli K-12 strains MG1655 and W3110.</title>
        <authorList>
            <person name="Hayashi K."/>
            <person name="Morooka N."/>
            <person name="Yamamoto Y."/>
            <person name="Fujita K."/>
            <person name="Isono K."/>
            <person name="Choi S."/>
            <person name="Ohtsubo E."/>
            <person name="Baba T."/>
            <person name="Wanner B.L."/>
            <person name="Mori H."/>
            <person name="Horiuchi T."/>
        </authorList>
    </citation>
    <scope>NUCLEOTIDE SEQUENCE [LARGE SCALE GENOMIC DNA]</scope>
    <source>
        <strain>K12 / W3110 / ATCC 27325 / DSM 5911</strain>
    </source>
</reference>
<reference key="3">
    <citation type="journal article" date="2008" name="Mol. Microbiol.">
        <title>Small membrane proteins found by comparative genomics and ribosome binding site models.</title>
        <authorList>
            <person name="Hemm M.R."/>
            <person name="Paul B.J."/>
            <person name="Schneider T.D."/>
            <person name="Storz G."/>
            <person name="Rudd K.E."/>
        </authorList>
    </citation>
    <scope>IDENTIFICATION</scope>
    <scope>INDUCTION</scope>
    <source>
        <strain>K12 / MG1655 / ATCC 47076</strain>
    </source>
</reference>
<reference key="4">
    <citation type="journal article" date="2010" name="J. Bacteriol.">
        <title>Small stress response proteins in Escherichia coli: proteins missed by classical proteomic studies.</title>
        <authorList>
            <person name="Hemm M.R."/>
            <person name="Paul B.J."/>
            <person name="Miranda-Rios J."/>
            <person name="Zhang A."/>
            <person name="Soltanzad N."/>
            <person name="Storz G."/>
        </authorList>
    </citation>
    <scope>INDUCTION</scope>
    <source>
        <strain>K12 / MG1655 / ATCC 47076</strain>
    </source>
</reference>
<evidence type="ECO:0000269" key="1">
    <source>
    </source>
</evidence>
<evidence type="ECO:0000269" key="2">
    <source>
    </source>
</evidence>
<keyword id="KW-1185">Reference proteome</keyword>
<keyword id="KW-0346">Stress response</keyword>
<comment type="induction">
    <text evidence="1 2">In stationary phase, induced at 45 degrees Celsius (at protein level).</text>
</comment>
<dbReference type="EMBL" id="U00096">
    <property type="protein sequence ID" value="ACO59996.1"/>
    <property type="molecule type" value="Genomic_DNA"/>
</dbReference>
<dbReference type="EMBL" id="AP009048">
    <property type="status" value="NOT_ANNOTATED_CDS"/>
    <property type="molecule type" value="Genomic_DNA"/>
</dbReference>
<dbReference type="RefSeq" id="WP_010723105.1">
    <property type="nucleotide sequence ID" value="NZ_SSZK01000001.1"/>
</dbReference>
<dbReference type="RefSeq" id="YP_002791244.1">
    <property type="nucleotide sequence ID" value="NC_000913.3"/>
</dbReference>
<dbReference type="STRING" id="511145.b4677"/>
<dbReference type="PaxDb" id="511145-b4677"/>
<dbReference type="EnsemblBacteria" id="ACO59996">
    <property type="protein sequence ID" value="ACO59996"/>
    <property type="gene ID" value="b4677"/>
</dbReference>
<dbReference type="GeneID" id="75171933"/>
<dbReference type="GeneID" id="7751641"/>
<dbReference type="KEGG" id="eco:b4677"/>
<dbReference type="InParanoid" id="C1P604"/>
<dbReference type="BioCyc" id="EcoCyc:MONOMER0-2871"/>
<dbReference type="PRO" id="PR:C1P604"/>
<dbReference type="Proteomes" id="UP000000625">
    <property type="component" value="Chromosome"/>
</dbReference>
<dbReference type="NCBIfam" id="NF038179">
    <property type="entry name" value="stress_YobI"/>
    <property type="match status" value="1"/>
</dbReference>
<gene>
    <name type="primary">yobI</name>
    <name type="ordered locus">b4677</name>
    <name type="ordered locus">JW1850.1</name>
</gene>
<sequence length="21" mass="2665">MYIFITHFFTEYVILKYLLPI</sequence>
<name>YOBI_ECOLI</name>
<proteinExistence type="evidence at protein level"/>